<evidence type="ECO:0000255" key="1">
    <source>
        <dbReference type="HAMAP-Rule" id="MF_00928"/>
    </source>
</evidence>
<evidence type="ECO:0000269" key="2">
    <source>
    </source>
</evidence>
<evidence type="ECO:0007829" key="3">
    <source>
        <dbReference type="PDB" id="3WAS"/>
    </source>
</evidence>
<protein>
    <recommendedName>
        <fullName evidence="1">4-O-beta-D-mannosyl-D-glucose phosphorylase</fullName>
        <shortName evidence="1">MGP</shortName>
        <shortName evidence="1">Mannosylglucose phosphorylase</shortName>
        <ecNumber evidence="1">2.4.1.281</ecNumber>
    </recommendedName>
</protein>
<gene>
    <name type="ordered locus">BF0772</name>
    <name type="ORF">BF9343_0737</name>
</gene>
<sequence length="390" mass="43886">MSLFNDKVAKLLAGHEALLMRKNEPVEEGNGVITRYRYPVLTAAHTPVFWRYDLNEETNPFLMERIGMNATLNAGAIKWDGKYLMLVRVEGADRKSFFAVAESPNGIDNFRFWEYPVTLPEDVVPATNVYDMRLTAHEDGWIYGIFCAERHDDNAPIGDLSSATATAGIARTKDLKNWERLPDLKTKSQQRNVVLHPEFVDGKYALYTRPQDGFIDTGSGGGIGWALIDDITHAEVGEEKIIDKRYYHTIKEVKNGEGPHPIKTPQGWLHLAHGVRNCAAGLRYVLYMYMTSLDDPTRLIASPAGYFMAPVGEERIGDVSNVLFSNGWIADDDGKVFIYYASSDTRMHVATSTIERLVDYCLHTPQDGFSSSASVEILKNLIERNLRLMK</sequence>
<accession>Q5LH68</accession>
<keyword id="KW-0002">3D-structure</keyword>
<keyword id="KW-0119">Carbohydrate metabolism</keyword>
<keyword id="KW-0961">Cell wall biogenesis/degradation</keyword>
<keyword id="KW-0328">Glycosyltransferase</keyword>
<keyword id="KW-0808">Transferase</keyword>
<feature type="chain" id="PRO_0000418860" description="4-O-beta-D-mannosyl-D-glucose phosphorylase">
    <location>
        <begin position="1"/>
        <end position="390"/>
    </location>
</feature>
<feature type="helix" evidence="3">
    <location>
        <begin position="3"/>
        <end position="20"/>
    </location>
</feature>
<feature type="strand" evidence="3">
    <location>
        <begin position="34"/>
        <end position="38"/>
    </location>
</feature>
<feature type="helix" evidence="3">
    <location>
        <begin position="43"/>
        <end position="45"/>
    </location>
</feature>
<feature type="helix" evidence="3">
    <location>
        <begin position="48"/>
        <end position="51"/>
    </location>
</feature>
<feature type="turn" evidence="3">
    <location>
        <begin position="56"/>
        <end position="58"/>
    </location>
</feature>
<feature type="strand" evidence="3">
    <location>
        <begin position="64"/>
        <end position="66"/>
    </location>
</feature>
<feature type="strand" evidence="3">
    <location>
        <begin position="68"/>
        <end position="79"/>
    </location>
</feature>
<feature type="strand" evidence="3">
    <location>
        <begin position="82"/>
        <end position="91"/>
    </location>
</feature>
<feature type="strand" evidence="3">
    <location>
        <begin position="96"/>
        <end position="108"/>
    </location>
</feature>
<feature type="strand" evidence="3">
    <location>
        <begin position="127"/>
        <end position="136"/>
    </location>
</feature>
<feature type="strand" evidence="3">
    <location>
        <begin position="142"/>
        <end position="151"/>
    </location>
</feature>
<feature type="strand" evidence="3">
    <location>
        <begin position="153"/>
        <end position="155"/>
    </location>
</feature>
<feature type="strand" evidence="3">
    <location>
        <begin position="163"/>
        <end position="177"/>
    </location>
</feature>
<feature type="strand" evidence="3">
    <location>
        <begin position="179"/>
        <end position="181"/>
    </location>
</feature>
<feature type="strand" evidence="3">
    <location>
        <begin position="187"/>
        <end position="190"/>
    </location>
</feature>
<feature type="strand" evidence="3">
    <location>
        <begin position="203"/>
        <end position="208"/>
    </location>
</feature>
<feature type="strand" evidence="3">
    <location>
        <begin position="210"/>
        <end position="215"/>
    </location>
</feature>
<feature type="strand" evidence="3">
    <location>
        <begin position="222"/>
        <end position="229"/>
    </location>
</feature>
<feature type="helix" evidence="3">
    <location>
        <begin position="231"/>
        <end position="233"/>
    </location>
</feature>
<feature type="strand" evidence="3">
    <location>
        <begin position="240"/>
        <end position="244"/>
    </location>
</feature>
<feature type="strand" evidence="3">
    <location>
        <begin position="252"/>
        <end position="257"/>
    </location>
</feature>
<feature type="strand" evidence="3">
    <location>
        <begin position="262"/>
        <end position="264"/>
    </location>
</feature>
<feature type="strand" evidence="3">
    <location>
        <begin position="267"/>
        <end position="278"/>
    </location>
</feature>
<feature type="strand" evidence="3">
    <location>
        <begin position="281"/>
        <end position="291"/>
    </location>
</feature>
<feature type="strand" evidence="3">
    <location>
        <begin position="298"/>
        <end position="301"/>
    </location>
</feature>
<feature type="strand" evidence="3">
    <location>
        <begin position="303"/>
        <end position="305"/>
    </location>
</feature>
<feature type="helix" evidence="3">
    <location>
        <begin position="312"/>
        <end position="315"/>
    </location>
</feature>
<feature type="strand" evidence="3">
    <location>
        <begin position="321"/>
        <end position="330"/>
    </location>
</feature>
<feature type="strand" evidence="3">
    <location>
        <begin position="334"/>
        <end position="342"/>
    </location>
</feature>
<feature type="turn" evidence="3">
    <location>
        <begin position="343"/>
        <end position="345"/>
    </location>
</feature>
<feature type="strand" evidence="3">
    <location>
        <begin position="346"/>
        <end position="353"/>
    </location>
</feature>
<feature type="helix" evidence="3">
    <location>
        <begin position="354"/>
        <end position="363"/>
    </location>
</feature>
<feature type="helix" evidence="3">
    <location>
        <begin position="371"/>
        <end position="389"/>
    </location>
</feature>
<comment type="function">
    <text evidence="1 2">Converts 4-O-beta-D-mannopyranosyl-D-glucopyranose (Man-Glc) to mannose 1-phosphate (Man1P) and glucose. Involved in a mannan catabolic pathway which feeds into glycolysis.</text>
</comment>
<comment type="catalytic activity">
    <reaction evidence="1 2">
        <text>4-O-beta-D-mannopyranosyl-D-glucopyranose + phosphate = alpha-D-mannose 1-phosphate + D-glucose</text>
        <dbReference type="Rhea" id="RHEA:32531"/>
        <dbReference type="ChEBI" id="CHEBI:4167"/>
        <dbReference type="ChEBI" id="CHEBI:43474"/>
        <dbReference type="ChEBI" id="CHEBI:58409"/>
        <dbReference type="ChEBI" id="CHEBI:64351"/>
        <dbReference type="EC" id="2.4.1.281"/>
    </reaction>
</comment>
<comment type="biophysicochemical properties">
    <kinetics>
        <KM evidence="2">8.3 mM for Man-Glc</KM>
        <KM evidence="2">2 mM for phosphate</KM>
    </kinetics>
    <phDependence>
        <text evidence="2">Optimum pH is 7.</text>
    </phDependence>
    <temperatureDependence>
        <text evidence="2">Optimum temperature is 50 degrees Celsius.</text>
    </temperatureDependence>
</comment>
<comment type="similarity">
    <text evidence="1">Belongs to the glycosyl hydrolase 130 family.</text>
</comment>
<reference key="1">
    <citation type="journal article" date="2005" name="Science">
        <title>Extensive DNA inversions in the B. fragilis genome control variable gene expression.</title>
        <authorList>
            <person name="Cerdeno-Tarraga A.-M."/>
            <person name="Patrick S."/>
            <person name="Crossman L.C."/>
            <person name="Blakely G."/>
            <person name="Abratt V."/>
            <person name="Lennard N."/>
            <person name="Poxton I."/>
            <person name="Duerden B."/>
            <person name="Harris B."/>
            <person name="Quail M.A."/>
            <person name="Barron A."/>
            <person name="Clark L."/>
            <person name="Corton C."/>
            <person name="Doggett J."/>
            <person name="Holden M.T.G."/>
            <person name="Larke N."/>
            <person name="Line A."/>
            <person name="Lord A."/>
            <person name="Norbertczak H."/>
            <person name="Ormond D."/>
            <person name="Price C."/>
            <person name="Rabbinowitsch E."/>
            <person name="Woodward J."/>
            <person name="Barrell B.G."/>
            <person name="Parkhill J."/>
        </authorList>
    </citation>
    <scope>NUCLEOTIDE SEQUENCE [LARGE SCALE GENOMIC DNA]</scope>
    <source>
        <strain>ATCC 25285 / DSM 2151 / CCUG 4856 / JCM 11019 / LMG 10263 / NCTC 9343 / Onslow / VPI 2553 / EN-2</strain>
    </source>
</reference>
<reference key="2">
    <citation type="journal article" date="2011" name="Biochem. Biophys. Res. Commun.">
        <title>New microbial mannan catabolic pathway that involves a novel mannosylglucose phosphorylase.</title>
        <authorList>
            <person name="Senoura T."/>
            <person name="Ito S."/>
            <person name="Taguchi H."/>
            <person name="Higa M."/>
            <person name="Hamada S."/>
            <person name="Matsui H."/>
            <person name="Ozawa T."/>
            <person name="Jin S."/>
            <person name="Watanabe J."/>
            <person name="Wasaki J."/>
            <person name="Ito S."/>
        </authorList>
    </citation>
    <scope>FUNCTION</scope>
    <scope>CATALYTIC ACTIVITY</scope>
    <scope>BIOPHYSICOCHEMICAL PROPERTIES</scope>
    <source>
        <strain>ATCC 25285 / DSM 2151 / CCUG 4856 / JCM 11019 / LMG 10263 / NCTC 9343 / Onslow / VPI 2553 / EN-2</strain>
    </source>
</reference>
<organism>
    <name type="scientific">Bacteroides fragilis (strain ATCC 25285 / DSM 2151 / CCUG 4856 / JCM 11019 / LMG 10263 / NCTC 9343 / Onslow / VPI 2553 / EN-2)</name>
    <dbReference type="NCBI Taxonomy" id="272559"/>
    <lineage>
        <taxon>Bacteria</taxon>
        <taxon>Pseudomonadati</taxon>
        <taxon>Bacteroidota</taxon>
        <taxon>Bacteroidia</taxon>
        <taxon>Bacteroidales</taxon>
        <taxon>Bacteroidaceae</taxon>
        <taxon>Bacteroides</taxon>
    </lineage>
</organism>
<proteinExistence type="evidence at protein level"/>
<dbReference type="EC" id="2.4.1.281" evidence="1"/>
<dbReference type="EMBL" id="CR626927">
    <property type="protein sequence ID" value="CAH06518.1"/>
    <property type="molecule type" value="Genomic_DNA"/>
</dbReference>
<dbReference type="RefSeq" id="WP_005785018.1">
    <property type="nucleotide sequence ID" value="NZ_UFTH01000001.1"/>
</dbReference>
<dbReference type="PDB" id="3WAS">
    <property type="method" value="X-ray"/>
    <property type="resolution" value="1.50 A"/>
    <property type="chains" value="A/B=1-390"/>
</dbReference>
<dbReference type="PDB" id="3WAT">
    <property type="method" value="X-ray"/>
    <property type="resolution" value="1.60 A"/>
    <property type="chains" value="A/B=1-390"/>
</dbReference>
<dbReference type="PDB" id="3WAU">
    <property type="method" value="X-ray"/>
    <property type="resolution" value="1.70 A"/>
    <property type="chains" value="A/B=1-390"/>
</dbReference>
<dbReference type="PDB" id="4KMI">
    <property type="method" value="X-ray"/>
    <property type="resolution" value="1.80 A"/>
    <property type="chains" value="A/B=1-390"/>
</dbReference>
<dbReference type="PDBsum" id="3WAS"/>
<dbReference type="PDBsum" id="3WAT"/>
<dbReference type="PDBsum" id="3WAU"/>
<dbReference type="PDBsum" id="4KMI"/>
<dbReference type="SMR" id="Q5LH68"/>
<dbReference type="CAZy" id="GH130">
    <property type="family name" value="Glycoside Hydrolase Family 130"/>
</dbReference>
<dbReference type="PaxDb" id="272559-BF9343_0737"/>
<dbReference type="GeneID" id="60366585"/>
<dbReference type="KEGG" id="bfs:BF9343_0737"/>
<dbReference type="eggNOG" id="COG2152">
    <property type="taxonomic scope" value="Bacteria"/>
</dbReference>
<dbReference type="HOGENOM" id="CLU_046648_4_0_10"/>
<dbReference type="BioCyc" id="BFRA272559:G1GHZ-806-MONOMER"/>
<dbReference type="BioCyc" id="MetaCyc:MONOMER-18532"/>
<dbReference type="BRENDA" id="2.4.1.281">
    <property type="organism ID" value="755"/>
</dbReference>
<dbReference type="EvolutionaryTrace" id="Q5LH68"/>
<dbReference type="Proteomes" id="UP000006731">
    <property type="component" value="Chromosome"/>
</dbReference>
<dbReference type="GO" id="GO:0016758">
    <property type="term" value="F:hexosyltransferase activity"/>
    <property type="evidence" value="ECO:0007669"/>
    <property type="project" value="UniProtKB-UniRule"/>
</dbReference>
<dbReference type="GO" id="GO:0005975">
    <property type="term" value="P:carbohydrate metabolic process"/>
    <property type="evidence" value="ECO:0007669"/>
    <property type="project" value="UniProtKB-UniRule"/>
</dbReference>
<dbReference type="GO" id="GO:0071555">
    <property type="term" value="P:cell wall organization"/>
    <property type="evidence" value="ECO:0007669"/>
    <property type="project" value="UniProtKB-KW"/>
</dbReference>
<dbReference type="CDD" id="cd08993">
    <property type="entry name" value="GH130"/>
    <property type="match status" value="1"/>
</dbReference>
<dbReference type="Gene3D" id="2.115.10.20">
    <property type="entry name" value="Glycosyl hydrolase domain, family 43"/>
    <property type="match status" value="1"/>
</dbReference>
<dbReference type="HAMAP" id="MF_00928">
    <property type="entry name" value="Man_Glc_phosphorylase"/>
    <property type="match status" value="1"/>
</dbReference>
<dbReference type="InterPro" id="IPR023296">
    <property type="entry name" value="Glyco_hydro_beta-prop_sf"/>
</dbReference>
<dbReference type="InterPro" id="IPR028583">
    <property type="entry name" value="Man_Glc_phosphorylase"/>
</dbReference>
<dbReference type="InterPro" id="IPR007184">
    <property type="entry name" value="Mannoside_phosphorylase"/>
</dbReference>
<dbReference type="PANTHER" id="PTHR34106:SF1">
    <property type="entry name" value="1,4-BETA-MANNOSYL-N-ACETYLGLUCOSAMINE PHOSPHORYLASE"/>
    <property type="match status" value="1"/>
</dbReference>
<dbReference type="PANTHER" id="PTHR34106">
    <property type="entry name" value="GLYCOSIDASE"/>
    <property type="match status" value="1"/>
</dbReference>
<dbReference type="Pfam" id="PF04041">
    <property type="entry name" value="Glyco_hydro_130"/>
    <property type="match status" value="1"/>
</dbReference>
<dbReference type="PIRSF" id="PIRSF016202">
    <property type="entry name" value="PH1107"/>
    <property type="match status" value="1"/>
</dbReference>
<dbReference type="SUPFAM" id="SSF75005">
    <property type="entry name" value="Arabinanase/levansucrase/invertase"/>
    <property type="match status" value="1"/>
</dbReference>
<name>MGP_BACFN</name>